<gene>
    <name evidence="1" type="primary">atpB</name>
    <name type="ordered locus">KPK_5538</name>
</gene>
<comment type="function">
    <text evidence="1">Key component of the proton channel; it plays a direct role in the translocation of protons across the membrane.</text>
</comment>
<comment type="subunit">
    <text evidence="1">F-type ATPases have 2 components, CF(1) - the catalytic core - and CF(0) - the membrane proton channel. CF(1) has five subunits: alpha(3), beta(3), gamma(1), delta(1), epsilon(1). CF(0) has three main subunits: a(1), b(2) and c(9-12). The alpha and beta chains form an alternating ring which encloses part of the gamma chain. CF(1) is attached to CF(0) by a central stalk formed by the gamma and epsilon chains, while a peripheral stalk is formed by the delta and b chains.</text>
</comment>
<comment type="subcellular location">
    <subcellularLocation>
        <location evidence="1">Cell inner membrane</location>
        <topology evidence="1">Multi-pass membrane protein</topology>
    </subcellularLocation>
</comment>
<comment type="similarity">
    <text evidence="1">Belongs to the ATPase A chain family.</text>
</comment>
<keyword id="KW-0066">ATP synthesis</keyword>
<keyword id="KW-0997">Cell inner membrane</keyword>
<keyword id="KW-1003">Cell membrane</keyword>
<keyword id="KW-0138">CF(0)</keyword>
<keyword id="KW-0375">Hydrogen ion transport</keyword>
<keyword id="KW-0406">Ion transport</keyword>
<keyword id="KW-0472">Membrane</keyword>
<keyword id="KW-0812">Transmembrane</keyword>
<keyword id="KW-1133">Transmembrane helix</keyword>
<keyword id="KW-0813">Transport</keyword>
<reference key="1">
    <citation type="journal article" date="2008" name="PLoS Genet.">
        <title>Complete genome sequence of the N2-fixing broad host range endophyte Klebsiella pneumoniae 342 and virulence predictions verified in mice.</title>
        <authorList>
            <person name="Fouts D.E."/>
            <person name="Tyler H.L."/>
            <person name="DeBoy R.T."/>
            <person name="Daugherty S."/>
            <person name="Ren Q."/>
            <person name="Badger J.H."/>
            <person name="Durkin A.S."/>
            <person name="Huot H."/>
            <person name="Shrivastava S."/>
            <person name="Kothari S."/>
            <person name="Dodson R.J."/>
            <person name="Mohamoud Y."/>
            <person name="Khouri H."/>
            <person name="Roesch L.F.W."/>
            <person name="Krogfelt K.A."/>
            <person name="Struve C."/>
            <person name="Triplett E.W."/>
            <person name="Methe B.A."/>
        </authorList>
    </citation>
    <scope>NUCLEOTIDE SEQUENCE [LARGE SCALE GENOMIC DNA]</scope>
    <source>
        <strain>342</strain>
    </source>
</reference>
<name>ATP6_KLEP3</name>
<sequence length="271" mass="30485">MASENMTPQDYIGHHLNNLQLDLRTFSLVDPHNHTATFWTLNIDSMFFSVVLGLLFLAMFRSVAKKATSGVPGKFQTFIEMIIGFVHGSVKDMYHGKSKVIAPLALTVFVWVFLMNLMDLLPIDLLPYIGEHIFGLPALRVVPSADVNITLSMALGVFILIIFYSIKMKGVGGFVKELTMQPFNHWAFIPVNLILEGVSLLSKPVSLGLRLFGNMYAGELIFILIAGLLPWWSQWVLNVPWAIFHILIITLQAFIFMVLTIVYLSMASEEH</sequence>
<proteinExistence type="inferred from homology"/>
<organism>
    <name type="scientific">Klebsiella pneumoniae (strain 342)</name>
    <dbReference type="NCBI Taxonomy" id="507522"/>
    <lineage>
        <taxon>Bacteria</taxon>
        <taxon>Pseudomonadati</taxon>
        <taxon>Pseudomonadota</taxon>
        <taxon>Gammaproteobacteria</taxon>
        <taxon>Enterobacterales</taxon>
        <taxon>Enterobacteriaceae</taxon>
        <taxon>Klebsiella/Raoultella group</taxon>
        <taxon>Klebsiella</taxon>
        <taxon>Klebsiella pneumoniae complex</taxon>
    </lineage>
</organism>
<feature type="chain" id="PRO_1000184285" description="ATP synthase subunit a">
    <location>
        <begin position="1"/>
        <end position="271"/>
    </location>
</feature>
<feature type="transmembrane region" description="Helical" evidence="1">
    <location>
        <begin position="38"/>
        <end position="58"/>
    </location>
</feature>
<feature type="transmembrane region" description="Helical" evidence="1">
    <location>
        <begin position="100"/>
        <end position="120"/>
    </location>
</feature>
<feature type="transmembrane region" description="Helical" evidence="1">
    <location>
        <begin position="146"/>
        <end position="166"/>
    </location>
</feature>
<feature type="transmembrane region" description="Helical" evidence="1">
    <location>
        <begin position="211"/>
        <end position="231"/>
    </location>
</feature>
<feature type="transmembrane region" description="Helical" evidence="1">
    <location>
        <begin position="242"/>
        <end position="262"/>
    </location>
</feature>
<evidence type="ECO:0000255" key="1">
    <source>
        <dbReference type="HAMAP-Rule" id="MF_01393"/>
    </source>
</evidence>
<protein>
    <recommendedName>
        <fullName evidence="1">ATP synthase subunit a</fullName>
    </recommendedName>
    <alternativeName>
        <fullName evidence="1">ATP synthase F0 sector subunit a</fullName>
    </alternativeName>
    <alternativeName>
        <fullName evidence="1">F-ATPase subunit 6</fullName>
    </alternativeName>
</protein>
<accession>B5XZL8</accession>
<dbReference type="EMBL" id="CP000964">
    <property type="protein sequence ID" value="ACI07982.1"/>
    <property type="molecule type" value="Genomic_DNA"/>
</dbReference>
<dbReference type="SMR" id="B5XZL8"/>
<dbReference type="KEGG" id="kpe:KPK_5538"/>
<dbReference type="HOGENOM" id="CLU_041018_1_0_6"/>
<dbReference type="Proteomes" id="UP000001734">
    <property type="component" value="Chromosome"/>
</dbReference>
<dbReference type="GO" id="GO:0005886">
    <property type="term" value="C:plasma membrane"/>
    <property type="evidence" value="ECO:0007669"/>
    <property type="project" value="UniProtKB-SubCell"/>
</dbReference>
<dbReference type="GO" id="GO:0045259">
    <property type="term" value="C:proton-transporting ATP synthase complex"/>
    <property type="evidence" value="ECO:0007669"/>
    <property type="project" value="UniProtKB-KW"/>
</dbReference>
<dbReference type="GO" id="GO:0046933">
    <property type="term" value="F:proton-transporting ATP synthase activity, rotational mechanism"/>
    <property type="evidence" value="ECO:0007669"/>
    <property type="project" value="UniProtKB-UniRule"/>
</dbReference>
<dbReference type="GO" id="GO:0042777">
    <property type="term" value="P:proton motive force-driven plasma membrane ATP synthesis"/>
    <property type="evidence" value="ECO:0007669"/>
    <property type="project" value="TreeGrafter"/>
</dbReference>
<dbReference type="CDD" id="cd00310">
    <property type="entry name" value="ATP-synt_Fo_a_6"/>
    <property type="match status" value="1"/>
</dbReference>
<dbReference type="FunFam" id="1.20.120.220:FF:000002">
    <property type="entry name" value="ATP synthase subunit a"/>
    <property type="match status" value="1"/>
</dbReference>
<dbReference type="Gene3D" id="1.20.120.220">
    <property type="entry name" value="ATP synthase, F0 complex, subunit A"/>
    <property type="match status" value="1"/>
</dbReference>
<dbReference type="HAMAP" id="MF_01393">
    <property type="entry name" value="ATP_synth_a_bact"/>
    <property type="match status" value="1"/>
</dbReference>
<dbReference type="InterPro" id="IPR045082">
    <property type="entry name" value="ATP_syn_F0_a_bact/chloroplast"/>
</dbReference>
<dbReference type="InterPro" id="IPR000568">
    <property type="entry name" value="ATP_synth_F0_asu"/>
</dbReference>
<dbReference type="InterPro" id="IPR023011">
    <property type="entry name" value="ATP_synth_F0_asu_AS"/>
</dbReference>
<dbReference type="InterPro" id="IPR035908">
    <property type="entry name" value="F0_ATP_A_sf"/>
</dbReference>
<dbReference type="NCBIfam" id="TIGR01131">
    <property type="entry name" value="ATP_synt_6_or_A"/>
    <property type="match status" value="1"/>
</dbReference>
<dbReference type="NCBIfam" id="NF004477">
    <property type="entry name" value="PRK05815.1-1"/>
    <property type="match status" value="1"/>
</dbReference>
<dbReference type="PANTHER" id="PTHR42823">
    <property type="entry name" value="ATP SYNTHASE SUBUNIT A, CHLOROPLASTIC"/>
    <property type="match status" value="1"/>
</dbReference>
<dbReference type="PANTHER" id="PTHR42823:SF3">
    <property type="entry name" value="ATP SYNTHASE SUBUNIT A, CHLOROPLASTIC"/>
    <property type="match status" value="1"/>
</dbReference>
<dbReference type="Pfam" id="PF00119">
    <property type="entry name" value="ATP-synt_A"/>
    <property type="match status" value="1"/>
</dbReference>
<dbReference type="PRINTS" id="PR00123">
    <property type="entry name" value="ATPASEA"/>
</dbReference>
<dbReference type="SUPFAM" id="SSF81336">
    <property type="entry name" value="F1F0 ATP synthase subunit A"/>
    <property type="match status" value="1"/>
</dbReference>
<dbReference type="PROSITE" id="PS00449">
    <property type="entry name" value="ATPASE_A"/>
    <property type="match status" value="1"/>
</dbReference>